<evidence type="ECO:0000250" key="1"/>
<evidence type="ECO:0000255" key="2"/>
<evidence type="ECO:0000256" key="3">
    <source>
        <dbReference type="SAM" id="MobiDB-lite"/>
    </source>
</evidence>
<evidence type="ECO:0000269" key="4">
    <source>
    </source>
</evidence>
<evidence type="ECO:0000305" key="5"/>
<gene>
    <name type="primary">Ntf3</name>
    <name type="synonym">Ntf-3</name>
</gene>
<name>NTF3_MOUSE</name>
<feature type="signal peptide" evidence="2">
    <location>
        <begin position="1"/>
        <end position="18"/>
    </location>
</feature>
<feature type="propeptide" id="PRO_0000019661" evidence="4">
    <location>
        <begin position="19"/>
        <end position="139"/>
    </location>
</feature>
<feature type="chain" id="PRO_0000019662" description="Neurotrophin-3">
    <location>
        <begin position="140"/>
        <end position="258"/>
    </location>
</feature>
<feature type="region of interest" description="Disordered" evidence="3">
    <location>
        <begin position="60"/>
        <end position="85"/>
    </location>
</feature>
<feature type="compositionally biased region" description="Basic and acidic residues" evidence="3">
    <location>
        <begin position="67"/>
        <end position="79"/>
    </location>
</feature>
<feature type="glycosylation site" description="N-linked (GlcNAc...) asparagine" evidence="2">
    <location>
        <position position="131"/>
    </location>
</feature>
<feature type="disulfide bond" evidence="1">
    <location>
        <begin position="153"/>
        <end position="218"/>
    </location>
</feature>
<feature type="disulfide bond" evidence="1">
    <location>
        <begin position="196"/>
        <end position="247"/>
    </location>
</feature>
<feature type="disulfide bond" evidence="1">
    <location>
        <begin position="206"/>
        <end position="249"/>
    </location>
</feature>
<accession>P20181</accession>
<protein>
    <recommendedName>
        <fullName>Neurotrophin-3</fullName>
        <shortName>NT-3</shortName>
    </recommendedName>
    <alternativeName>
        <fullName>HDNF</fullName>
    </alternativeName>
    <alternativeName>
        <fullName>Nerve growth factor 2</fullName>
        <shortName>NGF-2</shortName>
    </alternativeName>
    <alternativeName>
        <fullName>Neurotrophic factor</fullName>
    </alternativeName>
</protein>
<reference key="1">
    <citation type="journal article" date="1990" name="Nature">
        <title>Identification and characterization of a novel member of the nerve growth factor/brain-derived neurotrophic factor family.</title>
        <authorList>
            <person name="Hohn A."/>
            <person name="Leibrock J."/>
            <person name="Bailey K."/>
            <person name="Barde Y.-A."/>
        </authorList>
    </citation>
    <scope>NUCLEOTIDE SEQUENCE [GENOMIC DNA]</scope>
</reference>
<reference key="2">
    <citation type="journal article" date="2004" name="Genome Res.">
        <title>The status, quality, and expansion of the NIH full-length cDNA project: the Mammalian Gene Collection (MGC).</title>
        <authorList>
            <consortium name="The MGC Project Team"/>
        </authorList>
    </citation>
    <scope>NUCLEOTIDE SEQUENCE [LARGE SCALE MRNA]</scope>
    <source>
        <strain>C57BL/6J</strain>
        <tissue>Mammary gland</tissue>
    </source>
</reference>
<reference key="3">
    <citation type="journal article" date="1994" name="Eur. J. Biochem.">
        <title>Characterisation of neurotrophin dimers and monomers.</title>
        <authorList>
            <person name="Kolbeck R."/>
            <person name="Jungbluth S."/>
            <person name="Barde Y.-A."/>
        </authorList>
    </citation>
    <scope>PROTEIN SEQUENCE OF 140-152</scope>
</reference>
<keyword id="KW-0165">Cleavage on pair of basic residues</keyword>
<keyword id="KW-0903">Direct protein sequencing</keyword>
<keyword id="KW-1015">Disulfide bond</keyword>
<keyword id="KW-0325">Glycoprotein</keyword>
<keyword id="KW-0339">Growth factor</keyword>
<keyword id="KW-1185">Reference proteome</keyword>
<keyword id="KW-0964">Secreted</keyword>
<keyword id="KW-0732">Signal</keyword>
<dbReference type="EMBL" id="X53257">
    <property type="protein sequence ID" value="CAA37348.1"/>
    <property type="molecule type" value="Genomic_DNA"/>
</dbReference>
<dbReference type="EMBL" id="BC065785">
    <property type="protein sequence ID" value="AAH65785.1"/>
    <property type="molecule type" value="mRNA"/>
</dbReference>
<dbReference type="CCDS" id="CCDS20553.1"/>
<dbReference type="PIR" id="S09155">
    <property type="entry name" value="S09155"/>
</dbReference>
<dbReference type="RefSeq" id="NP_001157506.1">
    <property type="nucleotide sequence ID" value="NM_001164034.1"/>
</dbReference>
<dbReference type="RefSeq" id="NP_001157507.1">
    <property type="nucleotide sequence ID" value="NM_001164035.1"/>
</dbReference>
<dbReference type="RefSeq" id="NP_001397057.1">
    <property type="nucleotide sequence ID" value="NM_001410128.1"/>
</dbReference>
<dbReference type="RefSeq" id="NP_032768.1">
    <property type="nucleotide sequence ID" value="NM_008742.4"/>
</dbReference>
<dbReference type="RefSeq" id="XP_006505779.1">
    <property type="nucleotide sequence ID" value="XM_006505716.2"/>
</dbReference>
<dbReference type="SMR" id="P20181"/>
<dbReference type="BioGRID" id="201864">
    <property type="interactions" value="1"/>
</dbReference>
<dbReference type="DIP" id="DIP-5721N"/>
<dbReference type="FunCoup" id="P20181">
    <property type="interactions" value="740"/>
</dbReference>
<dbReference type="STRING" id="10090.ENSMUSP00000107863"/>
<dbReference type="GlyCosmos" id="P20181">
    <property type="glycosylation" value="1 site, No reported glycans"/>
</dbReference>
<dbReference type="GlyGen" id="P20181">
    <property type="glycosylation" value="1 site"/>
</dbReference>
<dbReference type="iPTMnet" id="P20181"/>
<dbReference type="PhosphoSitePlus" id="P20181"/>
<dbReference type="PaxDb" id="10090-ENSMUSP00000107863"/>
<dbReference type="Antibodypedia" id="22321">
    <property type="antibodies" value="668 antibodies from 41 providers"/>
</dbReference>
<dbReference type="DNASU" id="18205"/>
<dbReference type="Ensembl" id="ENSMUST00000050484.9">
    <property type="protein sequence ID" value="ENSMUSP00000052302.8"/>
    <property type="gene ID" value="ENSMUSG00000049107.14"/>
</dbReference>
<dbReference type="GeneID" id="18205"/>
<dbReference type="KEGG" id="mmu:18205"/>
<dbReference type="UCSC" id="uc012esy.1">
    <property type="organism name" value="mouse"/>
</dbReference>
<dbReference type="AGR" id="MGI:97380"/>
<dbReference type="CTD" id="4908"/>
<dbReference type="MGI" id="MGI:97380">
    <property type="gene designation" value="Ntf3"/>
</dbReference>
<dbReference type="VEuPathDB" id="HostDB:ENSMUSG00000049107"/>
<dbReference type="eggNOG" id="ENOG502R4FK">
    <property type="taxonomic scope" value="Eukaryota"/>
</dbReference>
<dbReference type="GeneTree" id="ENSGT00390000007725"/>
<dbReference type="HOGENOM" id="CLU_059942_1_1_1"/>
<dbReference type="InParanoid" id="P20181"/>
<dbReference type="OMA" id="FQPMIAM"/>
<dbReference type="OrthoDB" id="6491780at2759"/>
<dbReference type="PhylomeDB" id="P20181"/>
<dbReference type="Reactome" id="R-MMU-1257604">
    <property type="pathway name" value="PIP3 activates AKT signaling"/>
</dbReference>
<dbReference type="Reactome" id="R-MMU-6811558">
    <property type="pathway name" value="PI5P, PP2A and IER3 Regulate PI3K/AKT Signaling"/>
</dbReference>
<dbReference type="Reactome" id="R-MMU-9034013">
    <property type="pathway name" value="NTF3 activates NTRK3 signaling"/>
</dbReference>
<dbReference type="Reactome" id="R-MMU-9034793">
    <property type="pathway name" value="Activated NTRK3 signals through PLCG1"/>
</dbReference>
<dbReference type="Reactome" id="R-MMU-9603381">
    <property type="pathway name" value="Activated NTRK3 signals through PI3K"/>
</dbReference>
<dbReference type="BioGRID-ORCS" id="18205">
    <property type="hits" value="0 hits in 78 CRISPR screens"/>
</dbReference>
<dbReference type="ChiTaRS" id="Nutf2">
    <property type="organism name" value="mouse"/>
</dbReference>
<dbReference type="PRO" id="PR:P20181"/>
<dbReference type="Proteomes" id="UP000000589">
    <property type="component" value="Chromosome 6"/>
</dbReference>
<dbReference type="RNAct" id="P20181">
    <property type="molecule type" value="protein"/>
</dbReference>
<dbReference type="Bgee" id="ENSMUSG00000049107">
    <property type="expression patterns" value="Expressed in external naris and 194 other cell types or tissues"/>
</dbReference>
<dbReference type="ExpressionAtlas" id="P20181">
    <property type="expression patterns" value="baseline and differential"/>
</dbReference>
<dbReference type="GO" id="GO:0031410">
    <property type="term" value="C:cytoplasmic vesicle"/>
    <property type="evidence" value="ECO:0000314"/>
    <property type="project" value="MGI"/>
</dbReference>
<dbReference type="GO" id="GO:0005788">
    <property type="term" value="C:endoplasmic reticulum lumen"/>
    <property type="evidence" value="ECO:0000304"/>
    <property type="project" value="Reactome"/>
</dbReference>
<dbReference type="GO" id="GO:0005576">
    <property type="term" value="C:extracellular region"/>
    <property type="evidence" value="ECO:0000304"/>
    <property type="project" value="Reactome"/>
</dbReference>
<dbReference type="GO" id="GO:0045202">
    <property type="term" value="C:synapse"/>
    <property type="evidence" value="ECO:0007669"/>
    <property type="project" value="GOC"/>
</dbReference>
<dbReference type="GO" id="GO:0008083">
    <property type="term" value="F:growth factor activity"/>
    <property type="evidence" value="ECO:0007669"/>
    <property type="project" value="UniProtKB-KW"/>
</dbReference>
<dbReference type="GO" id="GO:0005166">
    <property type="term" value="F:neurotrophin p75 receptor binding"/>
    <property type="evidence" value="ECO:0000304"/>
    <property type="project" value="MGI"/>
</dbReference>
<dbReference type="GO" id="GO:0007411">
    <property type="term" value="P:axon guidance"/>
    <property type="evidence" value="ECO:0000314"/>
    <property type="project" value="MGI"/>
</dbReference>
<dbReference type="GO" id="GO:0007420">
    <property type="term" value="P:brain development"/>
    <property type="evidence" value="ECO:0000315"/>
    <property type="project" value="MGI"/>
</dbReference>
<dbReference type="GO" id="GO:0021954">
    <property type="term" value="P:central nervous system neuron development"/>
    <property type="evidence" value="ECO:0000315"/>
    <property type="project" value="MGI"/>
</dbReference>
<dbReference type="GO" id="GO:0048484">
    <property type="term" value="P:enteric nervous system development"/>
    <property type="evidence" value="ECO:0000315"/>
    <property type="project" value="MGI"/>
</dbReference>
<dbReference type="GO" id="GO:0008544">
    <property type="term" value="P:epidermis development"/>
    <property type="evidence" value="ECO:0000315"/>
    <property type="project" value="MGI"/>
</dbReference>
<dbReference type="GO" id="GO:0048699">
    <property type="term" value="P:generation of neurons"/>
    <property type="evidence" value="ECO:0000316"/>
    <property type="project" value="MGI"/>
</dbReference>
<dbReference type="GO" id="GO:0007403">
    <property type="term" value="P:glial cell fate determination"/>
    <property type="evidence" value="ECO:0000315"/>
    <property type="project" value="MGI"/>
</dbReference>
<dbReference type="GO" id="GO:0042490">
    <property type="term" value="P:mechanoreceptor differentiation"/>
    <property type="evidence" value="ECO:0000316"/>
    <property type="project" value="MGI"/>
</dbReference>
<dbReference type="GO" id="GO:0043524">
    <property type="term" value="P:negative regulation of neuron apoptotic process"/>
    <property type="evidence" value="ECO:0000315"/>
    <property type="project" value="MGI"/>
</dbReference>
<dbReference type="GO" id="GO:0021675">
    <property type="term" value="P:nerve development"/>
    <property type="evidence" value="ECO:0000315"/>
    <property type="project" value="MGI"/>
</dbReference>
<dbReference type="GO" id="GO:0007274">
    <property type="term" value="P:neuromuscular synaptic transmission"/>
    <property type="evidence" value="ECO:0000314"/>
    <property type="project" value="MGI"/>
</dbReference>
<dbReference type="GO" id="GO:0051402">
    <property type="term" value="P:neuron apoptotic process"/>
    <property type="evidence" value="ECO:0000315"/>
    <property type="project" value="MGI"/>
</dbReference>
<dbReference type="GO" id="GO:0007422">
    <property type="term" value="P:peripheral nervous system development"/>
    <property type="evidence" value="ECO:0000315"/>
    <property type="project" value="MGI"/>
</dbReference>
<dbReference type="GO" id="GO:0045944">
    <property type="term" value="P:positive regulation of transcription by RNA polymerase II"/>
    <property type="evidence" value="ECO:0000314"/>
    <property type="project" value="MGI"/>
</dbReference>
<dbReference type="GO" id="GO:0042981">
    <property type="term" value="P:regulation of apoptotic process"/>
    <property type="evidence" value="ECO:0000266"/>
    <property type="project" value="MGI"/>
</dbReference>
<dbReference type="GO" id="GO:0043523">
    <property type="term" value="P:regulation of neuron apoptotic process"/>
    <property type="evidence" value="ECO:0000314"/>
    <property type="project" value="MGI"/>
</dbReference>
<dbReference type="GO" id="GO:0051145">
    <property type="term" value="P:smooth muscle cell differentiation"/>
    <property type="evidence" value="ECO:0000315"/>
    <property type="project" value="MGI"/>
</dbReference>
<dbReference type="FunFam" id="2.10.90.10:FF:000002">
    <property type="entry name" value="Brain-derived neurotrophic factor"/>
    <property type="match status" value="1"/>
</dbReference>
<dbReference type="Gene3D" id="2.10.90.10">
    <property type="entry name" value="Cystine-knot cytokines"/>
    <property type="match status" value="1"/>
</dbReference>
<dbReference type="InterPro" id="IPR029034">
    <property type="entry name" value="Cystine-knot_cytokine"/>
</dbReference>
<dbReference type="InterPro" id="IPR020408">
    <property type="entry name" value="Nerve_growth_factor-like"/>
</dbReference>
<dbReference type="InterPro" id="IPR002072">
    <property type="entry name" value="Nerve_growth_factor-rel"/>
</dbReference>
<dbReference type="InterPro" id="IPR019846">
    <property type="entry name" value="Nerve_growth_factor_CS"/>
</dbReference>
<dbReference type="InterPro" id="IPR015578">
    <property type="entry name" value="Neurotrophin-3"/>
</dbReference>
<dbReference type="InterPro" id="IPR045815">
    <property type="entry name" value="NTF3_N"/>
</dbReference>
<dbReference type="PANTHER" id="PTHR11589">
    <property type="entry name" value="NERVE GROWTH FACTOR NGF -RELATED"/>
    <property type="match status" value="1"/>
</dbReference>
<dbReference type="PANTHER" id="PTHR11589:SF4">
    <property type="entry name" value="NEUROTROPHIN-3"/>
    <property type="match status" value="1"/>
</dbReference>
<dbReference type="Pfam" id="PF00243">
    <property type="entry name" value="NGF"/>
    <property type="match status" value="1"/>
</dbReference>
<dbReference type="Pfam" id="PF19338">
    <property type="entry name" value="NTF3_N"/>
    <property type="match status" value="1"/>
</dbReference>
<dbReference type="PIRSF" id="PIRSF001789">
    <property type="entry name" value="NGF"/>
    <property type="match status" value="1"/>
</dbReference>
<dbReference type="PRINTS" id="PR01914">
    <property type="entry name" value="NEUROTROPHN3"/>
</dbReference>
<dbReference type="PRINTS" id="PR00268">
    <property type="entry name" value="NGF"/>
</dbReference>
<dbReference type="SMART" id="SM00140">
    <property type="entry name" value="NGF"/>
    <property type="match status" value="1"/>
</dbReference>
<dbReference type="SUPFAM" id="SSF57501">
    <property type="entry name" value="Cystine-knot cytokines"/>
    <property type="match status" value="1"/>
</dbReference>
<dbReference type="PROSITE" id="PS00248">
    <property type="entry name" value="NGF_1"/>
    <property type="match status" value="1"/>
</dbReference>
<dbReference type="PROSITE" id="PS50270">
    <property type="entry name" value="NGF_2"/>
    <property type="match status" value="1"/>
</dbReference>
<sequence length="258" mass="29588">MSILFYVIFLAYLRGIQGNSMDQRSLPEDSLNSLIIKLIQADILKNKLSKQMVDVKENYQSTLPKAEAPREPEQGEATRSEFQPMIATDTELLRQQRRYNSPRVLLSDSTPLEPPPLYLMEDYVGNPVVANRTSPRRKRYAEHKSHRGEYSVCDSESLWVTDKSSAIDIRGHQVTVLGEIKTGNSPVKQYFYETRCKEARPVKNGCRGIDDKHWNSQCKTSQTYVRALTSENNKLVGWRWIRIDTSCVCALSRKIGRT</sequence>
<organism>
    <name type="scientific">Mus musculus</name>
    <name type="common">Mouse</name>
    <dbReference type="NCBI Taxonomy" id="10090"/>
    <lineage>
        <taxon>Eukaryota</taxon>
        <taxon>Metazoa</taxon>
        <taxon>Chordata</taxon>
        <taxon>Craniata</taxon>
        <taxon>Vertebrata</taxon>
        <taxon>Euteleostomi</taxon>
        <taxon>Mammalia</taxon>
        <taxon>Eutheria</taxon>
        <taxon>Euarchontoglires</taxon>
        <taxon>Glires</taxon>
        <taxon>Rodentia</taxon>
        <taxon>Myomorpha</taxon>
        <taxon>Muroidea</taxon>
        <taxon>Muridae</taxon>
        <taxon>Murinae</taxon>
        <taxon>Mus</taxon>
        <taxon>Mus</taxon>
    </lineage>
</organism>
<comment type="function">
    <text>Seems to promote the survival of visceral and proprioceptive sensory neurons.</text>
</comment>
<comment type="subcellular location">
    <subcellularLocation>
        <location>Secreted</location>
    </subcellularLocation>
</comment>
<comment type="tissue specificity">
    <text>Brain and peripheral tissues.</text>
</comment>
<comment type="similarity">
    <text evidence="5">Belongs to the NGF-beta family.</text>
</comment>
<proteinExistence type="evidence at protein level"/>